<evidence type="ECO:0000250" key="1">
    <source>
        <dbReference type="UniProtKB" id="Q9LCC6"/>
    </source>
</evidence>
<evidence type="ECO:0000269" key="2">
    <source>
    </source>
</evidence>
<evidence type="ECO:0000269" key="3">
    <source>
    </source>
</evidence>
<evidence type="ECO:0000269" key="4">
    <source>
    </source>
</evidence>
<evidence type="ECO:0000269" key="5">
    <source>
    </source>
</evidence>
<evidence type="ECO:0000269" key="6">
    <source>
    </source>
</evidence>
<evidence type="ECO:0000269" key="7">
    <source>
    </source>
</evidence>
<evidence type="ECO:0000269" key="8">
    <source>
    </source>
</evidence>
<evidence type="ECO:0000269" key="9">
    <source>
    </source>
</evidence>
<evidence type="ECO:0000269" key="10">
    <source>
    </source>
</evidence>
<evidence type="ECO:0000269" key="11">
    <source>
    </source>
</evidence>
<evidence type="ECO:0000269" key="12">
    <source>
    </source>
</evidence>
<evidence type="ECO:0000303" key="13">
    <source>
    </source>
</evidence>
<evidence type="ECO:0000303" key="14">
    <source>
    </source>
</evidence>
<evidence type="ECO:0000303" key="15">
    <source>
    </source>
</evidence>
<evidence type="ECO:0000305" key="16"/>
<evidence type="ECO:0000305" key="17">
    <source>
    </source>
</evidence>
<evidence type="ECO:0007744" key="18">
    <source>
        <dbReference type="PDB" id="1JSW"/>
    </source>
</evidence>
<evidence type="ECO:0007829" key="19">
    <source>
        <dbReference type="PDB" id="1JSW"/>
    </source>
</evidence>
<feature type="chain" id="PRO_0000161338" description="Aspartate ammonia-lyase">
    <location>
        <begin position="1"/>
        <end position="478"/>
    </location>
</feature>
<feature type="region of interest" description="SS loop" evidence="1">
    <location>
        <begin position="320"/>
        <end position="329"/>
    </location>
</feature>
<feature type="active site" description="Proton acceptor" evidence="1">
    <location>
        <position position="321"/>
    </location>
</feature>
<feature type="binding site" evidence="1">
    <location>
        <position position="104"/>
    </location>
    <ligand>
        <name>L-aspartate</name>
        <dbReference type="ChEBI" id="CHEBI:29991"/>
    </ligand>
</feature>
<feature type="binding site" evidence="1">
    <location>
        <position position="143"/>
    </location>
    <ligand>
        <name>L-aspartate</name>
        <dbReference type="ChEBI" id="CHEBI:29991"/>
    </ligand>
</feature>
<feature type="binding site" evidence="1">
    <location>
        <position position="144"/>
    </location>
    <ligand>
        <name>L-aspartate</name>
        <dbReference type="ChEBI" id="CHEBI:29991"/>
    </ligand>
</feature>
<feature type="binding site" evidence="1">
    <location>
        <position position="145"/>
    </location>
    <ligand>
        <name>L-aspartate</name>
        <dbReference type="ChEBI" id="CHEBI:29991"/>
    </ligand>
</feature>
<feature type="binding site" evidence="1">
    <location>
        <position position="190"/>
    </location>
    <ligand>
        <name>L-aspartate</name>
        <dbReference type="ChEBI" id="CHEBI:29991"/>
    </ligand>
</feature>
<feature type="binding site" evidence="1">
    <location>
        <position position="322"/>
    </location>
    <ligand>
        <name>L-aspartate</name>
        <dbReference type="ChEBI" id="CHEBI:29991"/>
    </ligand>
</feature>
<feature type="binding site" evidence="1">
    <location>
        <position position="327"/>
    </location>
    <ligand>
        <name>L-aspartate</name>
        <dbReference type="ChEBI" id="CHEBI:29991"/>
    </ligand>
</feature>
<feature type="mutagenesis site" description="Loss of activity." evidence="12">
    <original>D</original>
    <variation>A</variation>
    <location>
        <position position="10"/>
    </location>
</feature>
<feature type="mutagenesis site" description="5.4-fold decrease in kcat. 3.5-fold increase in KM for L-aspartate." evidence="12">
    <original>D</original>
    <variation>N</variation>
    <location>
        <position position="10"/>
    </location>
</feature>
<feature type="mutagenesis site" description="No effect on kcat. 2.7-fold increase in KM for L-aspartate." evidence="12">
    <original>R</original>
    <variation>A</variation>
    <location>
        <position position="15"/>
    </location>
</feature>
<feature type="mutagenesis site" description="No effect on kcat. 3.1-fold increase in KM for L-aspartate." evidence="12">
    <original>H</original>
    <variation>Q</variation>
    <location>
        <position position="26"/>
    </location>
</feature>
<feature type="mutagenesis site" description="No effect on kcat. 44-fold increase in KM for L-aspartate." evidence="12">
    <original>R</original>
    <variation>A</variation>
    <location>
        <position position="29"/>
    </location>
</feature>
<feature type="mutagenesis site" description="Produced exclusively as an inclusion body, and only the higher molecular weight oligomers are observed." evidence="2">
    <original>K</original>
    <variation>C</variation>
    <location>
        <position position="55"/>
    </location>
</feature>
<feature type="mutagenesis site" description="Loss of activity. Forms high molecular weight oligomers. May cause extensive changes in the structure. Treatment of this mutant for extended periods of time in the presence of high concentrations of the denaturant guanidinium chloride leads to the dissociation of the high molecular weight oligomers and results in the recovery of a substantial fraction of the wild-type activity. Upon removal of the denaturant this mutant slowly reverts to its inactive and insoluble form." evidence="2 9">
    <original>K</original>
    <variation>R</variation>
    <location>
        <position position="55"/>
    </location>
</feature>
<feature type="mutagenesis site" description="30% decrease in Vmax. KM for L-aspartate is almost unaffected." evidence="9">
    <original>H</original>
    <variation>L</variation>
    <location>
        <position position="124"/>
    </location>
</feature>
<feature type="mutagenesis site" description="9-fold decrease in kcat. 4-fold increase in KM for L-aspartate." evidence="12">
    <original>S</original>
    <variation>G</variation>
    <location>
        <position position="143"/>
    </location>
</feature>
<feature type="mutagenesis site" description="68-fold decrease in kcat. 2.9-fold increase in KM for L-aspartate." evidence="12">
    <original>S</original>
    <variation>T</variation>
    <location>
        <position position="143"/>
    </location>
</feature>
<feature type="mutagenesis site" description="Retains only 0.3% of the activity. 5-fold increase in KM for L-aspartate." evidence="9">
    <original>K</original>
    <variation>R</variation>
    <location>
        <position position="327"/>
    </location>
</feature>
<feature type="mutagenesis site" description="No significant change in kinetic parameters." evidence="9">
    <original>C</original>
    <variation>A</variation>
    <variation>S</variation>
    <location>
        <position position="390"/>
    </location>
</feature>
<feature type="sequence conflict" description="In Ref. 2; CAA27701." evidence="16" ref="2">
    <original>E</original>
    <variation>V</variation>
    <location>
        <position position="32"/>
    </location>
</feature>
<feature type="strand" evidence="19">
    <location>
        <begin position="4"/>
        <end position="9"/>
    </location>
</feature>
<feature type="strand" evidence="19">
    <location>
        <begin position="14"/>
        <end position="20"/>
    </location>
</feature>
<feature type="helix" evidence="19">
    <location>
        <begin position="25"/>
        <end position="33"/>
    </location>
</feature>
<feature type="helix" evidence="19">
    <location>
        <begin position="47"/>
        <end position="64"/>
    </location>
</feature>
<feature type="helix" evidence="19">
    <location>
        <begin position="70"/>
        <end position="83"/>
    </location>
</feature>
<feature type="turn" evidence="19">
    <location>
        <begin position="85"/>
        <end position="87"/>
    </location>
</feature>
<feature type="helix" evidence="19">
    <location>
        <begin position="104"/>
        <end position="120"/>
    </location>
</feature>
<feature type="turn" evidence="19">
    <location>
        <begin position="121"/>
        <end position="123"/>
    </location>
</feature>
<feature type="helix" evidence="19">
    <location>
        <begin position="134"/>
        <end position="138"/>
    </location>
</feature>
<feature type="helix" evidence="19">
    <location>
        <begin position="144"/>
        <end position="180"/>
    </location>
</feature>
<feature type="helix" evidence="19">
    <location>
        <begin position="181"/>
        <end position="183"/>
    </location>
</feature>
<feature type="strand" evidence="19">
    <location>
        <begin position="185"/>
        <end position="187"/>
    </location>
</feature>
<feature type="helix" evidence="19">
    <location>
        <begin position="190"/>
        <end position="192"/>
    </location>
</feature>
<feature type="strand" evidence="19">
    <location>
        <begin position="197"/>
        <end position="199"/>
    </location>
</feature>
<feature type="helix" evidence="19">
    <location>
        <begin position="200"/>
        <end position="224"/>
    </location>
</feature>
<feature type="strand" evidence="19">
    <location>
        <begin position="234"/>
        <end position="237"/>
    </location>
</feature>
<feature type="turn" evidence="19">
    <location>
        <begin position="242"/>
        <end position="244"/>
    </location>
</feature>
<feature type="helix" evidence="19">
    <location>
        <begin position="245"/>
        <end position="257"/>
    </location>
</feature>
<feature type="strand" evidence="19">
    <location>
        <begin position="267"/>
        <end position="270"/>
    </location>
</feature>
<feature type="helix" evidence="19">
    <location>
        <begin position="275"/>
        <end position="302"/>
    </location>
</feature>
<feature type="turn" evidence="19">
    <location>
        <begin position="305"/>
        <end position="307"/>
    </location>
</feature>
<feature type="helix" evidence="19">
    <location>
        <begin position="331"/>
        <end position="355"/>
    </location>
</feature>
<feature type="helix" evidence="19">
    <location>
        <begin position="365"/>
        <end position="389"/>
    </location>
</feature>
<feature type="helix" evidence="19">
    <location>
        <begin position="391"/>
        <end position="393"/>
    </location>
</feature>
<feature type="helix" evidence="19">
    <location>
        <begin position="398"/>
        <end position="405"/>
    </location>
</feature>
<feature type="helix" evidence="19">
    <location>
        <begin position="412"/>
        <end position="414"/>
    </location>
</feature>
<feature type="helix" evidence="19">
    <location>
        <begin position="416"/>
        <end position="419"/>
    </location>
</feature>
<feature type="helix" evidence="19">
    <location>
        <begin position="421"/>
        <end position="432"/>
    </location>
</feature>
<feature type="helix" evidence="19">
    <location>
        <begin position="438"/>
        <end position="445"/>
    </location>
</feature>
<feature type="helix" evidence="19">
    <location>
        <begin position="451"/>
        <end position="454"/>
    </location>
</feature>
<proteinExistence type="evidence at protein level"/>
<dbReference type="EC" id="4.3.1.1" evidence="3 4 5 6 8 9"/>
<dbReference type="EMBL" id="X02307">
    <property type="protein sequence ID" value="CAA26173.1"/>
    <property type="molecule type" value="Genomic_DNA"/>
</dbReference>
<dbReference type="EMBL" id="X04066">
    <property type="protein sequence ID" value="CAA27701.1"/>
    <property type="molecule type" value="Genomic_DNA"/>
</dbReference>
<dbReference type="EMBL" id="U14003">
    <property type="protein sequence ID" value="AAA97038.1"/>
    <property type="status" value="ALT_INIT"/>
    <property type="molecule type" value="Genomic_DNA"/>
</dbReference>
<dbReference type="EMBL" id="U00096">
    <property type="protein sequence ID" value="AAC77099.2"/>
    <property type="molecule type" value="Genomic_DNA"/>
</dbReference>
<dbReference type="EMBL" id="AP009048">
    <property type="protein sequence ID" value="BAE78141.1"/>
    <property type="molecule type" value="Genomic_DNA"/>
</dbReference>
<dbReference type="PIR" id="A01159">
    <property type="entry name" value="UFECDW"/>
</dbReference>
<dbReference type="RefSeq" id="NP_418562.4">
    <property type="nucleotide sequence ID" value="NC_000913.3"/>
</dbReference>
<dbReference type="RefSeq" id="WP_000069437.1">
    <property type="nucleotide sequence ID" value="NZ_STEB01000014.1"/>
</dbReference>
<dbReference type="PDB" id="1JSW">
    <property type="method" value="X-ray"/>
    <property type="resolution" value="2.70 A"/>
    <property type="chains" value="A/B/C/D=1-478"/>
</dbReference>
<dbReference type="PDBsum" id="1JSW"/>
<dbReference type="SMR" id="P0AC38"/>
<dbReference type="BioGRID" id="4262692">
    <property type="interactions" value="25"/>
</dbReference>
<dbReference type="DIP" id="DIP-36166N"/>
<dbReference type="FunCoup" id="P0AC38">
    <property type="interactions" value="202"/>
</dbReference>
<dbReference type="IntAct" id="P0AC38">
    <property type="interactions" value="12"/>
</dbReference>
<dbReference type="STRING" id="511145.b4139"/>
<dbReference type="DrugBank" id="DB02379">
    <property type="generic name" value="Beta-D-Glucose"/>
</dbReference>
<dbReference type="jPOST" id="P0AC38"/>
<dbReference type="PaxDb" id="511145-b4139"/>
<dbReference type="EnsemblBacteria" id="AAC77099">
    <property type="protein sequence ID" value="AAC77099"/>
    <property type="gene ID" value="b4139"/>
</dbReference>
<dbReference type="GeneID" id="93777685"/>
<dbReference type="GeneID" id="948658"/>
<dbReference type="KEGG" id="ecj:JW4099"/>
<dbReference type="KEGG" id="eco:b4139"/>
<dbReference type="KEGG" id="ecoc:C3026_22370"/>
<dbReference type="PATRIC" id="fig|1411691.4.peg.2561"/>
<dbReference type="EchoBASE" id="EB0093"/>
<dbReference type="eggNOG" id="COG1027">
    <property type="taxonomic scope" value="Bacteria"/>
</dbReference>
<dbReference type="HOGENOM" id="CLU_021594_4_0_6"/>
<dbReference type="InParanoid" id="P0AC38"/>
<dbReference type="OMA" id="EICENYV"/>
<dbReference type="OrthoDB" id="9802809at2"/>
<dbReference type="PhylomeDB" id="P0AC38"/>
<dbReference type="BioCyc" id="EcoCyc:ASPARTASE-MONOMER"/>
<dbReference type="BioCyc" id="MetaCyc:ASPARTASE-MONOMER"/>
<dbReference type="BRENDA" id="4.3.1.1">
    <property type="organism ID" value="2026"/>
</dbReference>
<dbReference type="SABIO-RK" id="P0AC38"/>
<dbReference type="EvolutionaryTrace" id="P0AC38"/>
<dbReference type="PRO" id="PR:P0AC38"/>
<dbReference type="Proteomes" id="UP000000625">
    <property type="component" value="Chromosome"/>
</dbReference>
<dbReference type="GO" id="GO:0005829">
    <property type="term" value="C:cytosol"/>
    <property type="evidence" value="ECO:0000314"/>
    <property type="project" value="EcoCyc"/>
</dbReference>
<dbReference type="GO" id="GO:0016020">
    <property type="term" value="C:membrane"/>
    <property type="evidence" value="ECO:0007005"/>
    <property type="project" value="UniProtKB"/>
</dbReference>
<dbReference type="GO" id="GO:0008797">
    <property type="term" value="F:aspartate ammonia-lyase activity"/>
    <property type="evidence" value="ECO:0000314"/>
    <property type="project" value="EcoCyc"/>
</dbReference>
<dbReference type="GO" id="GO:0042802">
    <property type="term" value="F:identical protein binding"/>
    <property type="evidence" value="ECO:0000314"/>
    <property type="project" value="EcoCyc"/>
</dbReference>
<dbReference type="GO" id="GO:0006533">
    <property type="term" value="P:aspartate catabolic process"/>
    <property type="evidence" value="ECO:0000315"/>
    <property type="project" value="EcoCyc"/>
</dbReference>
<dbReference type="GO" id="GO:0006531">
    <property type="term" value="P:aspartate metabolic process"/>
    <property type="evidence" value="ECO:0000314"/>
    <property type="project" value="EcoCyc"/>
</dbReference>
<dbReference type="GO" id="GO:0006538">
    <property type="term" value="P:glutamate catabolic process"/>
    <property type="evidence" value="ECO:0000315"/>
    <property type="project" value="EcoCyc"/>
</dbReference>
<dbReference type="GO" id="GO:0019740">
    <property type="term" value="P:nitrogen utilization"/>
    <property type="evidence" value="ECO:0000315"/>
    <property type="project" value="EcoCyc"/>
</dbReference>
<dbReference type="GO" id="GO:0051289">
    <property type="term" value="P:protein homotetramerization"/>
    <property type="evidence" value="ECO:0000314"/>
    <property type="project" value="EcoCyc"/>
</dbReference>
<dbReference type="GO" id="GO:0006099">
    <property type="term" value="P:tricarboxylic acid cycle"/>
    <property type="evidence" value="ECO:0007669"/>
    <property type="project" value="InterPro"/>
</dbReference>
<dbReference type="CDD" id="cd01357">
    <property type="entry name" value="Aspartase"/>
    <property type="match status" value="1"/>
</dbReference>
<dbReference type="FunFam" id="1.10.40.30:FF:000003">
    <property type="entry name" value="Aspartate ammonia-lyase"/>
    <property type="match status" value="1"/>
</dbReference>
<dbReference type="FunFam" id="1.10.275.10:FF:000001">
    <property type="entry name" value="Fumarate hydratase, mitochondrial"/>
    <property type="match status" value="1"/>
</dbReference>
<dbReference type="FunFam" id="1.20.200.10:FF:000001">
    <property type="entry name" value="Fumarate hydratase, mitochondrial"/>
    <property type="match status" value="1"/>
</dbReference>
<dbReference type="Gene3D" id="1.10.40.30">
    <property type="entry name" value="Fumarase/aspartase (C-terminal domain)"/>
    <property type="match status" value="1"/>
</dbReference>
<dbReference type="Gene3D" id="1.20.200.10">
    <property type="entry name" value="Fumarase/aspartase (Central domain)"/>
    <property type="match status" value="1"/>
</dbReference>
<dbReference type="Gene3D" id="1.10.275.10">
    <property type="entry name" value="Fumarase/aspartase (N-terminal domain)"/>
    <property type="match status" value="1"/>
</dbReference>
<dbReference type="InterPro" id="IPR004708">
    <property type="entry name" value="ApsA"/>
</dbReference>
<dbReference type="InterPro" id="IPR051546">
    <property type="entry name" value="Aspartate_Ammonia-Lyase"/>
</dbReference>
<dbReference type="InterPro" id="IPR024083">
    <property type="entry name" value="Fumarase/histidase_N"/>
</dbReference>
<dbReference type="InterPro" id="IPR018951">
    <property type="entry name" value="Fumarase_C_C"/>
</dbReference>
<dbReference type="InterPro" id="IPR020557">
    <property type="entry name" value="Fumarate_lyase_CS"/>
</dbReference>
<dbReference type="InterPro" id="IPR000362">
    <property type="entry name" value="Fumarate_lyase_fam"/>
</dbReference>
<dbReference type="InterPro" id="IPR022761">
    <property type="entry name" value="Fumarate_lyase_N"/>
</dbReference>
<dbReference type="InterPro" id="IPR008948">
    <property type="entry name" value="L-Aspartase-like"/>
</dbReference>
<dbReference type="NCBIfam" id="TIGR00839">
    <property type="entry name" value="aspA"/>
    <property type="match status" value="1"/>
</dbReference>
<dbReference type="NCBIfam" id="NF008909">
    <property type="entry name" value="PRK12273.1"/>
    <property type="match status" value="1"/>
</dbReference>
<dbReference type="PANTHER" id="PTHR42696">
    <property type="entry name" value="ASPARTATE AMMONIA-LYASE"/>
    <property type="match status" value="1"/>
</dbReference>
<dbReference type="PANTHER" id="PTHR42696:SF2">
    <property type="entry name" value="ASPARTATE AMMONIA-LYASE"/>
    <property type="match status" value="1"/>
</dbReference>
<dbReference type="Pfam" id="PF10415">
    <property type="entry name" value="FumaraseC_C"/>
    <property type="match status" value="1"/>
</dbReference>
<dbReference type="Pfam" id="PF00206">
    <property type="entry name" value="Lyase_1"/>
    <property type="match status" value="1"/>
</dbReference>
<dbReference type="PRINTS" id="PR00145">
    <property type="entry name" value="ARGSUCLYASE"/>
</dbReference>
<dbReference type="PRINTS" id="PR00149">
    <property type="entry name" value="FUMRATELYASE"/>
</dbReference>
<dbReference type="SUPFAM" id="SSF48557">
    <property type="entry name" value="L-aspartase-like"/>
    <property type="match status" value="1"/>
</dbReference>
<dbReference type="PROSITE" id="PS00163">
    <property type="entry name" value="FUMARATE_LYASES"/>
    <property type="match status" value="1"/>
</dbReference>
<organism>
    <name type="scientific">Escherichia coli (strain K12)</name>
    <dbReference type="NCBI Taxonomy" id="83333"/>
    <lineage>
        <taxon>Bacteria</taxon>
        <taxon>Pseudomonadati</taxon>
        <taxon>Pseudomonadota</taxon>
        <taxon>Gammaproteobacteria</taxon>
        <taxon>Enterobacterales</taxon>
        <taxon>Enterobacteriaceae</taxon>
        <taxon>Escherichia</taxon>
    </lineage>
</organism>
<protein>
    <recommendedName>
        <fullName evidence="15">Aspartate ammonia-lyase</fullName>
        <shortName evidence="15">Aspartase</shortName>
        <ecNumber evidence="3 4 5 6 8 9">4.3.1.1</ecNumber>
    </recommendedName>
</protein>
<gene>
    <name evidence="13 14" type="primary">aspA</name>
    <name type="ordered locus">b4139</name>
    <name type="ordered locus">JW4099</name>
</gene>
<keyword id="KW-0002">3D-structure</keyword>
<keyword id="KW-0456">Lyase</keyword>
<keyword id="KW-1185">Reference proteome</keyword>
<name>ASPA_ECOLI</name>
<sequence length="478" mass="52356">MSNNIRIEEDLLGTREVPADAYYGVHTLRAIENFYISNNKISDIPEFVRGMVMVKKAAAMANKELQTIPKSVANAIIAACDEVLNNGKCMDQFPVDVYQGGAGTSVNMNTNEVLANIGLELMGHQKGEYQYLNPNDHVNKCQSTNDAYPTGFRIAVYSSLIKLVDAINQLREGFERKAVEFQDILKMGRTQLQDAVPMTLGQEFRAFSILLKEEVKNIQRTAELLLEVNLGATAIGTGLNTPKEYSPLAVKKLAEVTGFPCVPAEDLIEATSDCGAYVMVHGALKRLAVKMSKICNDLRLLSSGPRAGLNEINLPELQAGSSIMPAKVNPVVPEVVNQVCFKVIGNDTTVTMAAEAGQLQLNVMEPVIGQAMFESVHILTNACYNLLEKCINGITANKEVCEGYVYNSIGIVTYLNPFIGHHNGDIVGKICAETGKSVREVVLERGLLTEAELDDIFSVQNLMHPAYKAKRYTDESEQ</sequence>
<reference key="1">
    <citation type="journal article" date="1985" name="Nucleic Acids Res.">
        <title>Cloning and nucleotide sequence of the aspartase gene of Escherichia coli W.</title>
        <authorList>
            <person name="Takagi J.S."/>
            <person name="Ida N."/>
            <person name="Tokushige M."/>
            <person name="Sakamoto H."/>
            <person name="Shimura Y."/>
        </authorList>
    </citation>
    <scope>NUCLEOTIDE SEQUENCE [GENOMIC DNA]</scope>
    <source>
        <strain>W / ATCC 11105 / DSM 1900</strain>
    </source>
</reference>
<reference key="2">
    <citation type="journal article" date="1986" name="Biochem. J.">
        <title>Structural and functional relationships between fumarase and aspartase. Nucleotide sequences of the fumarase (fumC) and aspartase (aspA) genes of Escherichia coli K12.</title>
        <authorList>
            <person name="Woods S.A."/>
            <person name="Miles J.S."/>
            <person name="Roberts R.E."/>
            <person name="Guest J.R."/>
        </authorList>
    </citation>
    <scope>NUCLEOTIDE SEQUENCE [GENOMIC DNA]</scope>
    <source>
        <strain>K12</strain>
    </source>
</reference>
<reference key="3">
    <citation type="journal article" date="1995" name="Nucleic Acids Res.">
        <title>Analysis of the Escherichia coli genome VI: DNA sequence of the region from 92.8 through 100 minutes.</title>
        <authorList>
            <person name="Burland V.D."/>
            <person name="Plunkett G. III"/>
            <person name="Sofia H.J."/>
            <person name="Daniels D.L."/>
            <person name="Blattner F.R."/>
        </authorList>
    </citation>
    <scope>NUCLEOTIDE SEQUENCE [LARGE SCALE GENOMIC DNA]</scope>
    <source>
        <strain>K12 / MG1655 / ATCC 47076</strain>
    </source>
</reference>
<reference key="4">
    <citation type="journal article" date="1997" name="Science">
        <title>The complete genome sequence of Escherichia coli K-12.</title>
        <authorList>
            <person name="Blattner F.R."/>
            <person name="Plunkett G. III"/>
            <person name="Bloch C.A."/>
            <person name="Perna N.T."/>
            <person name="Burland V."/>
            <person name="Riley M."/>
            <person name="Collado-Vides J."/>
            <person name="Glasner J.D."/>
            <person name="Rode C.K."/>
            <person name="Mayhew G.F."/>
            <person name="Gregor J."/>
            <person name="Davis N.W."/>
            <person name="Kirkpatrick H.A."/>
            <person name="Goeden M.A."/>
            <person name="Rose D.J."/>
            <person name="Mau B."/>
            <person name="Shao Y."/>
        </authorList>
    </citation>
    <scope>NUCLEOTIDE SEQUENCE [LARGE SCALE GENOMIC DNA]</scope>
    <source>
        <strain>K12 / MG1655 / ATCC 47076</strain>
    </source>
</reference>
<reference key="5">
    <citation type="journal article" date="2006" name="Mol. Syst. Biol.">
        <title>Highly accurate genome sequences of Escherichia coli K-12 strains MG1655 and W3110.</title>
        <authorList>
            <person name="Hayashi K."/>
            <person name="Morooka N."/>
            <person name="Yamamoto Y."/>
            <person name="Fujita K."/>
            <person name="Isono K."/>
            <person name="Choi S."/>
            <person name="Ohtsubo E."/>
            <person name="Baba T."/>
            <person name="Wanner B.L."/>
            <person name="Mori H."/>
            <person name="Horiuchi T."/>
        </authorList>
    </citation>
    <scope>NUCLEOTIDE SEQUENCE [LARGE SCALE GENOMIC DNA]</scope>
    <source>
        <strain>K12 / W3110 / ATCC 27325 / DSM 5911</strain>
    </source>
</reference>
<reference key="6">
    <citation type="journal article" date="1973" name="Biochim. Biophys. Acta">
        <title>Studies on aspartase. I. Purification and molecular properties of aspartase from Escherichia coli.</title>
        <authorList>
            <person name="Suzuki S."/>
            <person name="Yamaguchi J."/>
            <person name="Tokushige M."/>
        </authorList>
    </citation>
    <scope>FUNCTION</scope>
    <scope>CATALYTIC ACTIVITY</scope>
    <scope>ACTIVITY REGULATION</scope>
    <scope>BIOPHYSICOCHEMICAL PROPERTIES</scope>
    <scope>SUBUNIT</scope>
    <source>
        <strain>W / ATCC 11105 / DSM 1900</strain>
    </source>
</reference>
<reference key="7">
    <citation type="journal article" date="1981" name="Biochim. Biophys. Acta">
        <title>Studies on aspartase. VII. Subunit arrangement of Escherichia coli aspartase.</title>
        <authorList>
            <person name="Watanabe Y."/>
            <person name="Iwakura M."/>
            <person name="Tokushige M."/>
            <person name="Eguchi G."/>
        </authorList>
    </citation>
    <scope>SUBUNIT</scope>
    <source>
        <strain>W / ATCC 11105 / DSM 1900</strain>
    </source>
</reference>
<reference key="8">
    <citation type="journal article" date="1988" name="Biochemistry">
        <title>L-aspartase from Escherichia coli: substrate specificity and role of divalent metal ions.</title>
        <authorList>
            <person name="Falzone C.J."/>
            <person name="Karsten W.E."/>
            <person name="Conley J.D."/>
            <person name="Viola R.E."/>
        </authorList>
    </citation>
    <scope>FUNCTION</scope>
    <scope>CATALYTIC ACTIVITY</scope>
    <scope>ACTIVITY REGULATION</scope>
    <scope>DOMAIN</scope>
    <source>
        <strain>B</strain>
    </source>
</reference>
<reference key="9">
    <citation type="journal article" date="1991" name="Arch. Biochem. Biophys.">
        <title>Kinetic studies of L-aspartase from Escherichia coli: pH-dependent activity changes.</title>
        <authorList>
            <person name="Karsten W.E."/>
            <person name="Viola R.E."/>
        </authorList>
    </citation>
    <scope>FUNCTION</scope>
    <scope>CATALYTIC ACTIVITY</scope>
    <scope>ACTIVITY REGULATION</scope>
    <scope>BIOPHYSICOCHEMICAL PROPERTIES</scope>
</reference>
<reference key="10">
    <citation type="journal article" date="1993" name="J. Biochem.">
        <title>Identification of an active dimeric form of aspartase as a denaturation intermediate.</title>
        <authorList>
            <person name="Murase S."/>
            <person name="Kawata Y."/>
            <person name="Yumoto N."/>
        </authorList>
    </citation>
    <scope>SUBUNIT</scope>
</reference>
<reference key="11">
    <citation type="journal article" date="1994" name="Methods Enzymol.">
        <title>Extractive purification of aspartase from Escherichia coli K12.</title>
        <authorList>
            <person name="Paulsen J."/>
            <person name="Hustedt H."/>
        </authorList>
    </citation>
    <scope>FUNCTION</scope>
    <scope>CATALYTIC ACTIVITY</scope>
    <source>
        <strain>K12</strain>
    </source>
</reference>
<reference key="12">
    <citation type="journal article" date="1994" name="J. Biol. Chem.">
        <title>Mutagenic investigation of conserved functional amino acids in Escherichia coli L-aspartase.</title>
        <authorList>
            <person name="Saribas A.S."/>
            <person name="Schindler J.F."/>
            <person name="Viola R.E."/>
        </authorList>
    </citation>
    <scope>FUNCTION</scope>
    <scope>CATALYTIC ACTIVITY</scope>
    <scope>BIOPHYSICOCHEMICAL PROPERTIES</scope>
    <scope>SUBUNIT</scope>
    <scope>MUTAGENESIS OF LYS-55; HIS-124; LYS-327 AND CYS-390</scope>
</reference>
<reference key="13">
    <citation type="journal article" date="1997" name="Biochemistry">
        <title>Evaluation of functionally important amino acids in L-aspartate ammonia-lyase from Escherichia coli.</title>
        <authorList>
            <person name="Jayasekera M.M."/>
            <person name="Shi W."/>
            <person name="Farber G.K."/>
            <person name="Viola R.E."/>
        </authorList>
    </citation>
    <scope>BIOPHYSICOCHEMICAL PROPERTIES</scope>
    <scope>MUTAGENESIS OF ASP-10; ARG-15; HIS-26; ARG-29 AND SER-143</scope>
</reference>
<reference key="14">
    <citation type="journal article" date="1999" name="Biochem. Biophys. Res. Commun.">
        <title>Recovery of catalytic activity from an inactive aggregated mutant of L-aspartase.</title>
        <authorList>
            <person name="Jayasekera M.M."/>
            <person name="Viola R.E."/>
        </authorList>
    </citation>
    <scope>MUTAGENESIS OF LYS-55</scope>
</reference>
<reference key="15">
    <citation type="journal article" date="2021" name="Mol. Microbiol.">
        <title>L-Aspartate as a high-quality nitrogen source in Escherichia coli: Regulation of L-aspartase by the nitrogen regulatory system and interaction of L-aspartase with GlnB.</title>
        <authorList>
            <person name="Schubert C."/>
            <person name="Zedler S."/>
            <person name="Strecker A."/>
            <person name="Unden G."/>
        </authorList>
    </citation>
    <scope>FUNCTION</scope>
    <scope>CATALYTIC ACTIVITY</scope>
    <scope>ACTIVITY REGULATION</scope>
    <scope>INTERACTION WITH GLNB</scope>
    <scope>INDUCTION</scope>
    <scope>DISRUPTION PHENOTYPE</scope>
    <source>
        <strain>K12</strain>
    </source>
</reference>
<reference evidence="18" key="16">
    <citation type="journal article" date="1997" name="Biochemistry">
        <title>The structure of L-aspartate ammonia-lyase from Escherichia coli.</title>
        <authorList>
            <person name="Shi W."/>
            <person name="Dunbar J."/>
            <person name="Jayasekera M.M.K."/>
            <person name="Viola R.E."/>
            <person name="Farber G.K."/>
        </authorList>
    </citation>
    <scope>X-RAY CRYSTALLOGRAPHY (2.8 ANGSTROMS)</scope>
    <scope>SUBUNIT</scope>
    <scope>DOMAIN</scope>
</reference>
<accession>P0AC38</accession>
<accession>P04422</accession>
<accession>P78140</accession>
<accession>Q2M6G5</accession>
<comment type="function">
    <text evidence="3 4 5 6 8 9">Catalyzes the reversible conversion of L-aspartate to fumarate and ammonia (PubMed:1897995, PubMed:2853974, PubMed:33012071, PubMed:4584395, PubMed:8047016, PubMed:8119980). In the reverse reaction, consumption of fumarate is observed in the presence of not only NH4(+), but also hydroxylamine (NH(2)OH) (PubMed:1897995, PubMed:4584395). Is specific for L-aspartate and cannot use structural analogs of L-aspartate such as D-aspartate, DL-alpha-methylaspartate, DL-beta-methylaspartate, DL-threo-beta-hydroxy-aspartate, DL-erythro-beta-hydroxyaspartate, L-cysteate, L-alpha-aminobutyrate, L-asparagine, L-alanine or L-glutamate (PubMed:4584395). Represents the central enzyme for nitrogen assimilation from L-aspartate in E.coli (PubMed:33012071).</text>
</comment>
<comment type="catalytic activity">
    <reaction evidence="3 4 5 6 8 9">
        <text>L-aspartate = fumarate + NH4(+)</text>
        <dbReference type="Rhea" id="RHEA:16601"/>
        <dbReference type="ChEBI" id="CHEBI:28938"/>
        <dbReference type="ChEBI" id="CHEBI:29806"/>
        <dbReference type="ChEBI" id="CHEBI:29991"/>
        <dbReference type="EC" id="4.3.1.1"/>
    </reaction>
</comment>
<comment type="activity regulation">
    <text evidence="3 4 5 6">Under nitrogen-limiting conditions, activity is regulated by a central regulator of nitrogen metabolism, GlnB, which interacts with AspA and stimulates its L-aspartate deaminase activity, but not the reverse amination reaction (PubMed:33012071). AspA exists in a pH-dependent equilibrium between a higher pH form that has an absolute requirement for a divalent metal ion and for substrate activation, and a low pH form that does not require activation by either substrate or metal ions (PubMed:1897995, PubMed:2853974, PubMed:4584395). The interconversion between these enzyme forms is observed near neutral pH, and the divalent metal ion is required for enzyme activity above pH 7 (PubMed:1897995, PubMed:2853974). Many different divalent metal ions are capable of activation, including Mg(2+), Mn(2+), Co(2+), Ca(2+), Zn(2+) and Cd(2+) (PubMed:1897995, PubMed:2853974, PubMed:4584395). At low substrate concentrations, activity is inhibited by K(+), whereas the activity is rather enhanced at high substrate concentrations (PubMed:4584395). Completely inhibited by EDTA or thiol reagents such as p-hydroxymercuribenzoate or DTNB (PubMed:4584395). Competitively inhibited by O-phospho-D-serine, D-malate and DL-2-amino-3-phosphonopropanoate (PubMed:2853974). Not inhibited by carbonyl reagents (PubMed:4584395).</text>
</comment>
<comment type="biophysicochemical properties">
    <kinetics>
        <KM evidence="6">1 mM for L-aspartate</KM>
        <KM evidence="12">1.8 mM for L-aspartate</KM>
        <KM evidence="9">4.3 mM for L-aspartate</KM>
        <KM evidence="6">20 mM for NH(4)(+)</KM>
        <KM evidence="6">5 mM for NH(2)OH</KM>
        <text evidence="12">kcat is 40.6 min(-1).</text>
    </kinetics>
    <phDependence>
        <text evidence="3 6">Optimum pH is 8.7 (PubMed:4584395). For deamination reaction, shows maximum velocity at pH 7.3 for the metal ion-independent activity, and at pH 9 for the metal-activated activity (PubMed:1897995).</text>
    </phDependence>
</comment>
<comment type="pathway">
    <text evidence="17">Amino-acid metabolism.</text>
</comment>
<comment type="subunit">
    <text evidence="5 6 7 9 10 11">Homotetramer (PubMed:4584395, PubMed:7028124, PubMed:8119980, PubMed:8282732, PubMed:9230045). Dimer of dimers (PubMed:7028124, PubMed:8282732). Isolated dimers can have enzymatic activity (PubMed:8282732). The dissociation process from tetramer to dimer is reversible but the dissociation process from dimer to monomer is not reversible (PubMed:8282732). Interacts with the T-loop domain of the nitrogen regulatory protein GlnB (in the presence of the GlnB effectors ATP and 2-oxoglutarate) or with uridylylated GlnB (with or without effectors) (PubMed:33012071).</text>
</comment>
<comment type="interaction">
    <interactant intactId="EBI-544200">
        <id>P0AC38</id>
    </interactant>
    <interactant intactId="EBI-542092">
        <id>P0A6Y8</id>
        <label>dnaK</label>
    </interactant>
    <organismsDiffer>false</organismsDiffer>
    <experiments>3</experiments>
</comment>
<comment type="induction">
    <text evidence="5">Expression is independent of the nitrogen regulatory system, and none of the nitrogen sources, including L-aspartate, influence aspA expression (PubMed:33012071). Glucose represses the expression by fivefold (PubMed:33012071). Expression is also regulated by the general stress response factor, sigma-38 (PubMed:33012071).</text>
</comment>
<comment type="domain">
    <text evidence="4 11">Contains three domains, which are composed almost completely of alpha helices (PubMed:9230045). The active site is located in a region that contains side chains from three different subunits (PubMed:9230045). The divalent metal ion binds at the activator site and not at the enzyme active site (PubMed:2853974).</text>
</comment>
<comment type="disruption phenotype">
    <text evidence="5">Mutant shows decreased growth with L-aspartate as the sole nitrogen source.</text>
</comment>
<comment type="similarity">
    <text evidence="16">Belongs to the class-II fumarase/aspartase family. Aspartase subfamily.</text>
</comment>
<comment type="sequence caution" evidence="16">
    <conflict type="erroneous initiation">
        <sequence resource="EMBL-CDS" id="AAA97038"/>
    </conflict>
    <text>Extended N-terminus.</text>
</comment>